<proteinExistence type="evidence at protein level"/>
<organism evidence="12">
    <name type="scientific">Drosophila melanogaster</name>
    <name type="common">Fruit fly</name>
    <dbReference type="NCBI Taxonomy" id="7227"/>
    <lineage>
        <taxon>Eukaryota</taxon>
        <taxon>Metazoa</taxon>
        <taxon>Ecdysozoa</taxon>
        <taxon>Arthropoda</taxon>
        <taxon>Hexapoda</taxon>
        <taxon>Insecta</taxon>
        <taxon>Pterygota</taxon>
        <taxon>Neoptera</taxon>
        <taxon>Endopterygota</taxon>
        <taxon>Diptera</taxon>
        <taxon>Brachycera</taxon>
        <taxon>Muscomorpha</taxon>
        <taxon>Ephydroidea</taxon>
        <taxon>Drosophilidae</taxon>
        <taxon>Drosophila</taxon>
        <taxon>Sophophora</taxon>
    </lineage>
</organism>
<evidence type="ECO:0000250" key="1">
    <source>
        <dbReference type="UniProtKB" id="O14893"/>
    </source>
</evidence>
<evidence type="ECO:0000255" key="2"/>
<evidence type="ECO:0000269" key="3">
    <source>
    </source>
</evidence>
<evidence type="ECO:0000269" key="4">
    <source>
    </source>
</evidence>
<evidence type="ECO:0000269" key="5">
    <source>
    </source>
</evidence>
<evidence type="ECO:0000269" key="6">
    <source>
    </source>
</evidence>
<evidence type="ECO:0000269" key="7">
    <source>
    </source>
</evidence>
<evidence type="ECO:0000269" key="8">
    <source>
    </source>
</evidence>
<evidence type="ECO:0000305" key="9"/>
<evidence type="ECO:0000312" key="10">
    <source>
        <dbReference type="FlyBase" id="FBgn0036850"/>
    </source>
</evidence>
<evidence type="ECO:0000312" key="11">
    <source>
        <dbReference type="PDB" id="4V98"/>
    </source>
</evidence>
<evidence type="ECO:0000312" key="12">
    <source>
        <dbReference type="Proteomes" id="UP000000803"/>
    </source>
</evidence>
<evidence type="ECO:0007829" key="13">
    <source>
        <dbReference type="PDB" id="4V98"/>
    </source>
</evidence>
<keyword id="KW-0002">3D-structure</keyword>
<keyword id="KW-0963">Cytoplasm</keyword>
<keyword id="KW-0507">mRNA processing</keyword>
<keyword id="KW-0508">mRNA splicing</keyword>
<keyword id="KW-1185">Reference proteome</keyword>
<keyword id="KW-0747">Spliceosome</keyword>
<protein>
    <recommendedName>
        <fullName evidence="9">Gem-associated protein 2</fullName>
        <shortName evidence="10">Gemin2</shortName>
    </recommendedName>
</protein>
<comment type="function">
    <text evidence="1 3 5 7 8">Component of the survival motor neuron (SMN) complex that catalyzes the assembly of small nuclear ribonucleoproteins (snRNPs), the building blocks of the spliceosome, and thereby plays an important role in the splicing of cellular pre-mRNAs (PubMed:18621711, PubMed:23333303, PubMed:30563832). Most spliceosomal snRNPs contain a common set of Sm proteins SNRPB, SNRPD1, SNRPD2, SNRPD3, SNRPE, SNRPF and SNRPG that assemble in a heptameric protein ring on the Sm site of the small nuclear RNA to form the core snRNP (Sm core) (By similarity). In the cytosol, the Sm proteins SNRPD1, SNRPD2, SNRPE, SNRPF and SNRPG (5Sm) are trapped in an inactive 6S pICln-Sm complex by the chaperone CLNS1A that controls the assembly of the core snRNP (By similarity). To assemble core snRNPs, the SMN complex accepts the trapped 5Sm proteins from CLNS1A (By similarity). Binding of snRNA inside 5Sm ultimately triggers eviction of the SMN complex, thereby allowing binding of SNRPD3 and SNRPB to complete assembly of the core snRNP (By similarity). Within the SMN complex, GEMIN2 constrains the conformation of 5Sm, thereby promoting 5Sm binding to snRNA containing the snRNP code (a nonameric Sm site and a 3'-adjacent stem-loop), thus preventing progression of assembly until a cognate substrate is bound (By similarity). Involved in adult motor function (PubMed:26098872).</text>
</comment>
<comment type="subunit">
    <text evidence="3 5 8">Component of the core survival motor neuron (SMN) complex composed of Smn, Gem2, Gem3, rig/Gem5 and one of 3 almost identical Gem4 paralogs encoded by Glos/Gem4a, Gem4b or Gem4c (PubMed:30563832). Part of a minimal SMN complex composed of Smn and Gem2 only; this complex is active in UsnRNP assembly (PubMed:18621711, PubMed:23333303). The SMN complex associates with the entire set of spliceosomal snRNP Sm proteins, SmB, SmD1, SmD2, SmD3, SmE, SmF and SmG, and with the snRNP-specific proteins snRNP-U1-70K, U2A, snf/U1A and U5-116KD (PubMed:18621711, PubMed:23333303).</text>
</comment>
<comment type="interaction">
    <interactant intactId="EBI-108834">
        <id>Q9VVX0</id>
    </interactant>
    <interactant intactId="EBI-185315">
        <id>Q9VV74</id>
        <label>Smn</label>
    </interactant>
    <organismsDiffer>false</organismsDiffer>
    <experiments>6</experiments>
</comment>
<comment type="subcellular location">
    <subcellularLocation>
        <location evidence="3 4">Cytoplasm</location>
    </subcellularLocation>
    <subcellularLocation>
        <location evidence="4">Cytoplasm</location>
        <location evidence="4">U-body</location>
    </subcellularLocation>
</comment>
<comment type="tissue specificity">
    <text evidence="4">Expressed in nurse cells and oocytes.</text>
</comment>
<comment type="disruption phenotype">
    <text evidence="6">RNAi-mediated knockdown is late larval to adult lethal; the phenotype is the same if knockdown is restricted to muscle tissue (PubMed:24391840). Conditional RNAi-mediated knockdown in adult muscle tissue results in age-dependent decline of motor functions, including climbing ability and flight (PubMed:24391840).</text>
</comment>
<comment type="similarity">
    <text evidence="2">Belongs to the gemin-2 family.</text>
</comment>
<comment type="sequence caution" evidence="9">
    <conflict type="erroneous initiation">
        <sequence resource="EMBL-CDS" id="AAL39848"/>
    </conflict>
    <text>Extended N-terminus.</text>
</comment>
<sequence>MQHEPEDQTFQLQALEICEPDSSFDPQKPPESGEEYLMHMFYERKRCPAVVTKRSSKIRNNTGNTTLEMLDNPELPPFKCLLPTPEWRDEQVKSFQAARSQVLVLRKELANNNYDQSGEPPLTSDQEKWKEFCRNQQPLLSTLLHLTQNDLELLLEMLSKWLQDPNTTVDLLHDVWLARWLYATLVCLHLPLEPHVFSTLRYIARTCIHLRNQLKEDEVQRAAPYNLLLTLTVQVFAQNDFKDYI</sequence>
<accession>Q9VVX0</accession>
<accession>Q7K0M0</accession>
<dbReference type="EMBL" id="AE014296">
    <property type="protein sequence ID" value="AAF49187.1"/>
    <property type="molecule type" value="Genomic_DNA"/>
</dbReference>
<dbReference type="EMBL" id="AE014296">
    <property type="protein sequence ID" value="AGB94727.1"/>
    <property type="molecule type" value="Genomic_DNA"/>
</dbReference>
<dbReference type="EMBL" id="AY069703">
    <property type="protein sequence ID" value="AAL39848.2"/>
    <property type="status" value="ALT_INIT"/>
    <property type="molecule type" value="mRNA"/>
</dbReference>
<dbReference type="RefSeq" id="NP_001262034.1">
    <property type="nucleotide sequence ID" value="NM_001275105.1"/>
</dbReference>
<dbReference type="RefSeq" id="NP_649092.1">
    <property type="nucleotide sequence ID" value="NM_140835.4"/>
</dbReference>
<dbReference type="PDB" id="4V98">
    <property type="method" value="X-ray"/>
    <property type="resolution" value="3.10 A"/>
    <property type="chains" value="A2/AF/AN/AV/Ad/Al/At/B2/BF/BN/BV/Bd/Bl/Bt/CF/CN/CV/Cd/Cl/Ct=1-245"/>
</dbReference>
<dbReference type="PDBsum" id="4V98"/>
<dbReference type="SASBDB" id="Q9VVX0"/>
<dbReference type="SMR" id="Q9VVX0"/>
<dbReference type="BioGRID" id="65364">
    <property type="interactions" value="15"/>
</dbReference>
<dbReference type="ComplexPortal" id="CPX-8008">
    <property type="entry name" value="Survival motor neuron complex, Gem4A variant"/>
</dbReference>
<dbReference type="ComplexPortal" id="CPX-8066">
    <property type="entry name" value="Survival motor neuron complex, Gem4B variant"/>
</dbReference>
<dbReference type="ComplexPortal" id="CPX-8067">
    <property type="entry name" value="Survival motor neuron complex, Gem4C variant"/>
</dbReference>
<dbReference type="FunCoup" id="Q9VVX0">
    <property type="interactions" value="1296"/>
</dbReference>
<dbReference type="IntAct" id="Q9VVX0">
    <property type="interactions" value="17"/>
</dbReference>
<dbReference type="STRING" id="7227.FBpp0074799"/>
<dbReference type="PaxDb" id="7227-FBpp0303126"/>
<dbReference type="DNASU" id="40087"/>
<dbReference type="EnsemblMetazoa" id="FBtr0075032">
    <property type="protein sequence ID" value="FBpp0074799"/>
    <property type="gene ID" value="FBgn0036850"/>
</dbReference>
<dbReference type="EnsemblMetazoa" id="FBtr0330093">
    <property type="protein sequence ID" value="FBpp0303126"/>
    <property type="gene ID" value="FBgn0036850"/>
</dbReference>
<dbReference type="GeneID" id="40087"/>
<dbReference type="KEGG" id="dme:Dmel_CG10419"/>
<dbReference type="UCSC" id="CG10419-RA">
    <property type="organism name" value="d. melanogaster"/>
</dbReference>
<dbReference type="AGR" id="FB:FBgn0036850"/>
<dbReference type="CTD" id="40087"/>
<dbReference type="FlyBase" id="FBgn0036850">
    <property type="gene designation" value="Gem2"/>
</dbReference>
<dbReference type="VEuPathDB" id="VectorBase:FBgn0036850"/>
<dbReference type="eggNOG" id="ENOG502QPK4">
    <property type="taxonomic scope" value="Eukaryota"/>
</dbReference>
<dbReference type="GeneTree" id="ENSGT00390000013814"/>
<dbReference type="HOGENOM" id="CLU_053222_0_0_1"/>
<dbReference type="InParanoid" id="Q9VVX0"/>
<dbReference type="OMA" id="PHKCLLP"/>
<dbReference type="OrthoDB" id="428895at2759"/>
<dbReference type="PhylomeDB" id="Q9VVX0"/>
<dbReference type="BioGRID-ORCS" id="40087">
    <property type="hits" value="0 hits in 1 CRISPR screen"/>
</dbReference>
<dbReference type="CD-CODE" id="A086309B">
    <property type="entry name" value="U-body"/>
</dbReference>
<dbReference type="GenomeRNAi" id="40087"/>
<dbReference type="PRO" id="PR:Q9VVX0"/>
<dbReference type="Proteomes" id="UP000000803">
    <property type="component" value="Chromosome 3L"/>
</dbReference>
<dbReference type="Bgee" id="FBgn0036850">
    <property type="expression patterns" value="Expressed in egg cell and 56 other cell types or tissues"/>
</dbReference>
<dbReference type="GO" id="GO:0071254">
    <property type="term" value="C:cytoplasmic U snRNP body"/>
    <property type="evidence" value="ECO:0000314"/>
    <property type="project" value="FlyBase"/>
</dbReference>
<dbReference type="GO" id="GO:0005634">
    <property type="term" value="C:nucleus"/>
    <property type="evidence" value="ECO:0000318"/>
    <property type="project" value="GO_Central"/>
</dbReference>
<dbReference type="GO" id="GO:0034730">
    <property type="term" value="C:SmD-containing SMN-Sm protein complex"/>
    <property type="evidence" value="ECO:0000314"/>
    <property type="project" value="UniProtKB"/>
</dbReference>
<dbReference type="GO" id="GO:0032797">
    <property type="term" value="C:SMN complex"/>
    <property type="evidence" value="ECO:0000314"/>
    <property type="project" value="FlyBase"/>
</dbReference>
<dbReference type="GO" id="GO:0034718">
    <property type="term" value="C:SMN-Gemin2 complex"/>
    <property type="evidence" value="ECO:0000314"/>
    <property type="project" value="UniProtKB"/>
</dbReference>
<dbReference type="GO" id="GO:0005681">
    <property type="term" value="C:spliceosomal complex"/>
    <property type="evidence" value="ECO:0007669"/>
    <property type="project" value="UniProtKB-KW"/>
</dbReference>
<dbReference type="GO" id="GO:0008344">
    <property type="term" value="P:adult locomotory behavior"/>
    <property type="evidence" value="ECO:0000315"/>
    <property type="project" value="FlyBase"/>
</dbReference>
<dbReference type="GO" id="GO:0007629">
    <property type="term" value="P:flight behavior"/>
    <property type="evidence" value="ECO:0000315"/>
    <property type="project" value="FlyBase"/>
</dbReference>
<dbReference type="GO" id="GO:0022618">
    <property type="term" value="P:protein-RNA complex assembly"/>
    <property type="evidence" value="ECO:0000314"/>
    <property type="project" value="FlyBase"/>
</dbReference>
<dbReference type="GO" id="GO:0000245">
    <property type="term" value="P:spliceosomal complex assembly"/>
    <property type="evidence" value="ECO:0007669"/>
    <property type="project" value="InterPro"/>
</dbReference>
<dbReference type="GO" id="GO:0000387">
    <property type="term" value="P:spliceosomal snRNP assembly"/>
    <property type="evidence" value="ECO:0000314"/>
    <property type="project" value="UniProtKB"/>
</dbReference>
<dbReference type="FunFam" id="1.20.58.1070:FF:000011">
    <property type="entry name" value="Gem-associated protein 2"/>
    <property type="match status" value="1"/>
</dbReference>
<dbReference type="Gene3D" id="1.20.58.1070">
    <property type="match status" value="1"/>
</dbReference>
<dbReference type="InterPro" id="IPR017364">
    <property type="entry name" value="GEMIN2"/>
</dbReference>
<dbReference type="InterPro" id="IPR035426">
    <property type="entry name" value="Gemin2/Brr1"/>
</dbReference>
<dbReference type="PANTHER" id="PTHR12794:SF0">
    <property type="entry name" value="GEM-ASSOCIATED PROTEIN 2"/>
    <property type="match status" value="1"/>
</dbReference>
<dbReference type="PANTHER" id="PTHR12794">
    <property type="entry name" value="GEMIN2"/>
    <property type="match status" value="1"/>
</dbReference>
<dbReference type="Pfam" id="PF04938">
    <property type="entry name" value="SIP1"/>
    <property type="match status" value="1"/>
</dbReference>
<dbReference type="PIRSF" id="PIRSF038038">
    <property type="entry name" value="SMN_Gemin2"/>
    <property type="match status" value="1"/>
</dbReference>
<name>GEMI2_DROME</name>
<feature type="chain" id="PRO_0000424375" description="Gem-associated protein 2">
    <location>
        <begin position="1"/>
        <end position="245"/>
    </location>
</feature>
<feature type="strand" evidence="13">
    <location>
        <begin position="32"/>
        <end position="34"/>
    </location>
</feature>
<feature type="helix" evidence="13">
    <location>
        <begin position="35"/>
        <end position="46"/>
    </location>
</feature>
<feature type="strand" evidence="13">
    <location>
        <begin position="56"/>
        <end position="58"/>
    </location>
</feature>
<feature type="helix" evidence="13">
    <location>
        <begin position="85"/>
        <end position="111"/>
    </location>
</feature>
<feature type="helix" evidence="13">
    <location>
        <begin position="116"/>
        <end position="118"/>
    </location>
</feature>
<feature type="helix" evidence="13">
    <location>
        <begin position="127"/>
        <end position="135"/>
    </location>
</feature>
<feature type="helix" evidence="13">
    <location>
        <begin position="140"/>
        <end position="143"/>
    </location>
</feature>
<feature type="helix" evidence="13">
    <location>
        <begin position="148"/>
        <end position="160"/>
    </location>
</feature>
<feature type="strand" evidence="13">
    <location>
        <begin position="171"/>
        <end position="174"/>
    </location>
</feature>
<feature type="helix" evidence="13">
    <location>
        <begin position="175"/>
        <end position="187"/>
    </location>
</feature>
<feature type="helix" evidence="13">
    <location>
        <begin position="194"/>
        <end position="212"/>
    </location>
</feature>
<feature type="helix" evidence="13">
    <location>
        <begin position="219"/>
        <end position="234"/>
    </location>
</feature>
<feature type="helix" evidence="13">
    <location>
        <begin position="242"/>
        <end position="244"/>
    </location>
</feature>
<gene>
    <name evidence="10" type="primary">Gem2</name>
    <name evidence="10" type="ORF">CG10419</name>
</gene>
<reference evidence="12" key="1">
    <citation type="journal article" date="2000" name="Science">
        <title>The genome sequence of Drosophila melanogaster.</title>
        <authorList>
            <person name="Adams M.D."/>
            <person name="Celniker S.E."/>
            <person name="Holt R.A."/>
            <person name="Evans C.A."/>
            <person name="Gocayne J.D."/>
            <person name="Amanatides P.G."/>
            <person name="Scherer S.E."/>
            <person name="Li P.W."/>
            <person name="Hoskins R.A."/>
            <person name="Galle R.F."/>
            <person name="George R.A."/>
            <person name="Lewis S.E."/>
            <person name="Richards S."/>
            <person name="Ashburner M."/>
            <person name="Henderson S.N."/>
            <person name="Sutton G.G."/>
            <person name="Wortman J.R."/>
            <person name="Yandell M.D."/>
            <person name="Zhang Q."/>
            <person name="Chen L.X."/>
            <person name="Brandon R.C."/>
            <person name="Rogers Y.-H.C."/>
            <person name="Blazej R.G."/>
            <person name="Champe M."/>
            <person name="Pfeiffer B.D."/>
            <person name="Wan K.H."/>
            <person name="Doyle C."/>
            <person name="Baxter E.G."/>
            <person name="Helt G."/>
            <person name="Nelson C.R."/>
            <person name="Miklos G.L.G."/>
            <person name="Abril J.F."/>
            <person name="Agbayani A."/>
            <person name="An H.-J."/>
            <person name="Andrews-Pfannkoch C."/>
            <person name="Baldwin D."/>
            <person name="Ballew R.M."/>
            <person name="Basu A."/>
            <person name="Baxendale J."/>
            <person name="Bayraktaroglu L."/>
            <person name="Beasley E.M."/>
            <person name="Beeson K.Y."/>
            <person name="Benos P.V."/>
            <person name="Berman B.P."/>
            <person name="Bhandari D."/>
            <person name="Bolshakov S."/>
            <person name="Borkova D."/>
            <person name="Botchan M.R."/>
            <person name="Bouck J."/>
            <person name="Brokstein P."/>
            <person name="Brottier P."/>
            <person name="Burtis K.C."/>
            <person name="Busam D.A."/>
            <person name="Butler H."/>
            <person name="Cadieu E."/>
            <person name="Center A."/>
            <person name="Chandra I."/>
            <person name="Cherry J.M."/>
            <person name="Cawley S."/>
            <person name="Dahlke C."/>
            <person name="Davenport L.B."/>
            <person name="Davies P."/>
            <person name="de Pablos B."/>
            <person name="Delcher A."/>
            <person name="Deng Z."/>
            <person name="Mays A.D."/>
            <person name="Dew I."/>
            <person name="Dietz S.M."/>
            <person name="Dodson K."/>
            <person name="Doup L.E."/>
            <person name="Downes M."/>
            <person name="Dugan-Rocha S."/>
            <person name="Dunkov B.C."/>
            <person name="Dunn P."/>
            <person name="Durbin K.J."/>
            <person name="Evangelista C.C."/>
            <person name="Ferraz C."/>
            <person name="Ferriera S."/>
            <person name="Fleischmann W."/>
            <person name="Fosler C."/>
            <person name="Gabrielian A.E."/>
            <person name="Garg N.S."/>
            <person name="Gelbart W.M."/>
            <person name="Glasser K."/>
            <person name="Glodek A."/>
            <person name="Gong F."/>
            <person name="Gorrell J.H."/>
            <person name="Gu Z."/>
            <person name="Guan P."/>
            <person name="Harris M."/>
            <person name="Harris N.L."/>
            <person name="Harvey D.A."/>
            <person name="Heiman T.J."/>
            <person name="Hernandez J.R."/>
            <person name="Houck J."/>
            <person name="Hostin D."/>
            <person name="Houston K.A."/>
            <person name="Howland T.J."/>
            <person name="Wei M.-H."/>
            <person name="Ibegwam C."/>
            <person name="Jalali M."/>
            <person name="Kalush F."/>
            <person name="Karpen G.H."/>
            <person name="Ke Z."/>
            <person name="Kennison J.A."/>
            <person name="Ketchum K.A."/>
            <person name="Kimmel B.E."/>
            <person name="Kodira C.D."/>
            <person name="Kraft C.L."/>
            <person name="Kravitz S."/>
            <person name="Kulp D."/>
            <person name="Lai Z."/>
            <person name="Lasko P."/>
            <person name="Lei Y."/>
            <person name="Levitsky A.A."/>
            <person name="Li J.H."/>
            <person name="Li Z."/>
            <person name="Liang Y."/>
            <person name="Lin X."/>
            <person name="Liu X."/>
            <person name="Mattei B."/>
            <person name="McIntosh T.C."/>
            <person name="McLeod M.P."/>
            <person name="McPherson D."/>
            <person name="Merkulov G."/>
            <person name="Milshina N.V."/>
            <person name="Mobarry C."/>
            <person name="Morris J."/>
            <person name="Moshrefi A."/>
            <person name="Mount S.M."/>
            <person name="Moy M."/>
            <person name="Murphy B."/>
            <person name="Murphy L."/>
            <person name="Muzny D.M."/>
            <person name="Nelson D.L."/>
            <person name="Nelson D.R."/>
            <person name="Nelson K.A."/>
            <person name="Nixon K."/>
            <person name="Nusskern D.R."/>
            <person name="Pacleb J.M."/>
            <person name="Palazzolo M."/>
            <person name="Pittman G.S."/>
            <person name="Pan S."/>
            <person name="Pollard J."/>
            <person name="Puri V."/>
            <person name="Reese M.G."/>
            <person name="Reinert K."/>
            <person name="Remington K."/>
            <person name="Saunders R.D.C."/>
            <person name="Scheeler F."/>
            <person name="Shen H."/>
            <person name="Shue B.C."/>
            <person name="Siden-Kiamos I."/>
            <person name="Simpson M."/>
            <person name="Skupski M.P."/>
            <person name="Smith T.J."/>
            <person name="Spier E."/>
            <person name="Spradling A.C."/>
            <person name="Stapleton M."/>
            <person name="Strong R."/>
            <person name="Sun E."/>
            <person name="Svirskas R."/>
            <person name="Tector C."/>
            <person name="Turner R."/>
            <person name="Venter E."/>
            <person name="Wang A.H."/>
            <person name="Wang X."/>
            <person name="Wang Z.-Y."/>
            <person name="Wassarman D.A."/>
            <person name="Weinstock G.M."/>
            <person name="Weissenbach J."/>
            <person name="Williams S.M."/>
            <person name="Woodage T."/>
            <person name="Worley K.C."/>
            <person name="Wu D."/>
            <person name="Yang S."/>
            <person name="Yao Q.A."/>
            <person name="Ye J."/>
            <person name="Yeh R.-F."/>
            <person name="Zaveri J.S."/>
            <person name="Zhan M."/>
            <person name="Zhang G."/>
            <person name="Zhao Q."/>
            <person name="Zheng L."/>
            <person name="Zheng X.H."/>
            <person name="Zhong F.N."/>
            <person name="Zhong W."/>
            <person name="Zhou X."/>
            <person name="Zhu S.C."/>
            <person name="Zhu X."/>
            <person name="Smith H.O."/>
            <person name="Gibbs R.A."/>
            <person name="Myers E.W."/>
            <person name="Rubin G.M."/>
            <person name="Venter J.C."/>
        </authorList>
    </citation>
    <scope>NUCLEOTIDE SEQUENCE [LARGE SCALE GENOMIC DNA]</scope>
    <source>
        <strain evidence="12">Berkeley</strain>
    </source>
</reference>
<reference evidence="12" key="2">
    <citation type="journal article" date="2002" name="Genome Biol.">
        <title>Annotation of the Drosophila melanogaster euchromatic genome: a systematic review.</title>
        <authorList>
            <person name="Misra S."/>
            <person name="Crosby M.A."/>
            <person name="Mungall C.J."/>
            <person name="Matthews B.B."/>
            <person name="Campbell K.S."/>
            <person name="Hradecky P."/>
            <person name="Huang Y."/>
            <person name="Kaminker J.S."/>
            <person name="Millburn G.H."/>
            <person name="Prochnik S.E."/>
            <person name="Smith C.D."/>
            <person name="Tupy J.L."/>
            <person name="Whitfield E.J."/>
            <person name="Bayraktaroglu L."/>
            <person name="Berman B.P."/>
            <person name="Bettencourt B.R."/>
            <person name="Celniker S.E."/>
            <person name="de Grey A.D.N.J."/>
            <person name="Drysdale R.A."/>
            <person name="Harris N.L."/>
            <person name="Richter J."/>
            <person name="Russo S."/>
            <person name="Schroeder A.J."/>
            <person name="Shu S.Q."/>
            <person name="Stapleton M."/>
            <person name="Yamada C."/>
            <person name="Ashburner M."/>
            <person name="Gelbart W.M."/>
            <person name="Rubin G.M."/>
            <person name="Lewis S.E."/>
        </authorList>
    </citation>
    <scope>GENOME REANNOTATION</scope>
    <source>
        <strain evidence="12">Berkeley</strain>
    </source>
</reference>
<reference evidence="12" key="3">
    <citation type="submission" date="2003-01" db="EMBL/GenBank/DDBJ databases">
        <authorList>
            <person name="Stapleton M."/>
            <person name="Brokstein P."/>
            <person name="Hong L."/>
            <person name="Agbayani A."/>
            <person name="Carlson J."/>
            <person name="Champe M."/>
            <person name="Chavez C."/>
            <person name="Dorsett V."/>
            <person name="Dresnek D."/>
            <person name="Farfan D."/>
            <person name="Frise E."/>
            <person name="George R."/>
            <person name="Gonzalez M."/>
            <person name="Guarin H."/>
            <person name="Kronmiller B."/>
            <person name="Li P."/>
            <person name="Liao G."/>
            <person name="Miranda A."/>
            <person name="Mungall C.J."/>
            <person name="Nunoo J."/>
            <person name="Pacleb J."/>
            <person name="Paragas V."/>
            <person name="Park S."/>
            <person name="Patel S."/>
            <person name="Phouanenavong S."/>
            <person name="Wan K."/>
            <person name="Yu C."/>
            <person name="Lewis S.E."/>
            <person name="Rubin G.M."/>
            <person name="Celniker S."/>
        </authorList>
    </citation>
    <scope>NUCLEOTIDE SEQUENCE [LARGE SCALE MRNA]</scope>
    <source>
        <strain evidence="12">Berkeley</strain>
    </source>
</reference>
<reference evidence="9" key="4">
    <citation type="journal article" date="2008" name="Proc. Natl. Acad. Sci. U.S.A.">
        <title>Evolution of an RNP assembly system: a minimal SMN complex facilitates formation of UsnRNPs in Drosophila melanogaster.</title>
        <authorList>
            <person name="Kroiss M."/>
            <person name="Schultz J."/>
            <person name="Wiesner J."/>
            <person name="Chari A."/>
            <person name="Sickmann A."/>
            <person name="Fischer U."/>
        </authorList>
    </citation>
    <scope>FUNCTION</scope>
    <scope>IDENTIFICATION IN THE SMN COMPLEX</scope>
    <scope>INTERACTION WITH THE SPLICEOSOME USNRNP PROTEINS SNRNP-U1-70K</scope>
    <scope>U2A</scope>
    <scope>SNF/U1A AND U5-116KD</scope>
    <scope>INTERACTION WITH THE SNRNP SM PROTEINS</scope>
    <scope>SUBCELLULAR LOCATION</scope>
</reference>
<reference evidence="9" key="5">
    <citation type="journal article" date="2010" name="Exp. Cell Res.">
        <title>Drosophila SMN complex proteins Gemin2, Gemin3, and Gemin5 are components of U bodies.</title>
        <authorList>
            <person name="Cauchi R.J."/>
            <person name="Sanchez-Pulido L."/>
            <person name="Liu J.L."/>
        </authorList>
    </citation>
    <scope>SUBCELLULAR LOCATION</scope>
    <scope>TISSUE SPECIFICITY</scope>
</reference>
<reference key="6">
    <citation type="journal article" date="2013" name="PLoS ONE">
        <title>The Gemin associates of survival motor neuron are required for motor function in Drosophila.</title>
        <authorList>
            <person name="Borg R."/>
            <person name="Cauchi R.J."/>
        </authorList>
    </citation>
    <scope>DISRUPTION PHENOTYPE</scope>
</reference>
<reference key="7">
    <citation type="journal article" date="2015" name="PLoS ONE">
        <title>Genetic Interactions between the Members of the SMN-Gemins Complex in Drosophila.</title>
        <authorList>
            <person name="Borg R.M."/>
            <person name="Bordonne R."/>
            <person name="Vassallo N."/>
            <person name="Cauchi R.J."/>
        </authorList>
    </citation>
    <scope>FUNCTION</scope>
</reference>
<reference key="8">
    <citation type="journal article" date="2019" name="G3 (Bethesda)">
        <title>Composition of the Survival Motor Neuron (SMN) Complex in Drosophila melanogaster.</title>
        <authorList>
            <person name="Matera A.G."/>
            <person name="Raimer A.C."/>
            <person name="Schmidt C.A."/>
            <person name="Kelly J.A."/>
            <person name="Droby G.N."/>
            <person name="Baillat D."/>
            <person name="Ten Have S."/>
            <person name="Lamond A.I."/>
            <person name="Wagner E.J."/>
            <person name="Gray K.M."/>
        </authorList>
    </citation>
    <scope>FUNCTION</scope>
    <scope>IDENTIFICATION IN THE SMN COMPLEX</scope>
    <scope>IDENTIFICATION BY MASS SPECTROMETRY</scope>
</reference>
<reference evidence="11" key="9">
    <citation type="journal article" date="2013" name="Mol. Cell">
        <title>Structural basis of assembly chaperone-mediated snRNP formation.</title>
        <authorList>
            <person name="Grimm C."/>
            <person name="Chari A."/>
            <person name="Pelz J.P."/>
            <person name="Kuper J."/>
            <person name="Kisker C."/>
            <person name="Diederichs K."/>
            <person name="Stark H."/>
            <person name="Schindelin H."/>
            <person name="Fischer U."/>
        </authorList>
    </citation>
    <scope>X-RAY CRYSTALLOGRAPHY (3.10 ANGSTROMS)</scope>
    <scope>FUNCTION</scope>
    <scope>SUBUNIT</scope>
</reference>